<dbReference type="EMBL" id="ABCC02000026">
    <property type="protein sequence ID" value="EDP16856.1"/>
    <property type="molecule type" value="Genomic_DNA"/>
</dbReference>
<dbReference type="RefSeq" id="WP_002565301.1">
    <property type="nucleotide sequence ID" value="NZ_DS480683.1"/>
</dbReference>
<dbReference type="SMR" id="A8RQK7"/>
<dbReference type="PaxDb" id="411902-CLOBOL_02770"/>
<dbReference type="eggNOG" id="COG4948">
    <property type="taxonomic scope" value="Bacteria"/>
</dbReference>
<dbReference type="HOGENOM" id="CLU_030273_6_1_9"/>
<dbReference type="Proteomes" id="UP000005396">
    <property type="component" value="Unassembled WGS sequence"/>
</dbReference>
<dbReference type="GO" id="GO:0000287">
    <property type="term" value="F:magnesium ion binding"/>
    <property type="evidence" value="ECO:0000250"/>
    <property type="project" value="UniProtKB"/>
</dbReference>
<dbReference type="GO" id="GO:0009063">
    <property type="term" value="P:amino acid catabolic process"/>
    <property type="evidence" value="ECO:0007669"/>
    <property type="project" value="InterPro"/>
</dbReference>
<dbReference type="FunFam" id="3.20.20.120:FF:000011">
    <property type="entry name" value="D-galactonate dehydratase family member VSWAT3_13707"/>
    <property type="match status" value="1"/>
</dbReference>
<dbReference type="Gene3D" id="3.20.20.120">
    <property type="entry name" value="Enolase-like C-terminal domain"/>
    <property type="match status" value="1"/>
</dbReference>
<dbReference type="Gene3D" id="3.30.390.10">
    <property type="entry name" value="Enolase-like, N-terminal domain"/>
    <property type="match status" value="1"/>
</dbReference>
<dbReference type="InterPro" id="IPR034593">
    <property type="entry name" value="DgoD-like"/>
</dbReference>
<dbReference type="InterPro" id="IPR036849">
    <property type="entry name" value="Enolase-like_C_sf"/>
</dbReference>
<dbReference type="InterPro" id="IPR029017">
    <property type="entry name" value="Enolase-like_N"/>
</dbReference>
<dbReference type="InterPro" id="IPR029065">
    <property type="entry name" value="Enolase_C-like"/>
</dbReference>
<dbReference type="InterPro" id="IPR018110">
    <property type="entry name" value="Mandel_Rmase/mucon_lact_enz_CS"/>
</dbReference>
<dbReference type="InterPro" id="IPR013342">
    <property type="entry name" value="Mandelate_racemase_C"/>
</dbReference>
<dbReference type="InterPro" id="IPR013341">
    <property type="entry name" value="Mandelate_racemase_N_dom"/>
</dbReference>
<dbReference type="PANTHER" id="PTHR48080">
    <property type="entry name" value="D-GALACTONATE DEHYDRATASE-RELATED"/>
    <property type="match status" value="1"/>
</dbReference>
<dbReference type="PANTHER" id="PTHR48080:SF6">
    <property type="entry name" value="STARVATION-SENSING PROTEIN RSPA"/>
    <property type="match status" value="1"/>
</dbReference>
<dbReference type="Pfam" id="PF13378">
    <property type="entry name" value="MR_MLE_C"/>
    <property type="match status" value="1"/>
</dbReference>
<dbReference type="Pfam" id="PF02746">
    <property type="entry name" value="MR_MLE_N"/>
    <property type="match status" value="1"/>
</dbReference>
<dbReference type="SFLD" id="SFLDS00001">
    <property type="entry name" value="Enolase"/>
    <property type="match status" value="1"/>
</dbReference>
<dbReference type="SMART" id="SM00922">
    <property type="entry name" value="MR_MLE"/>
    <property type="match status" value="1"/>
</dbReference>
<dbReference type="SUPFAM" id="SSF51604">
    <property type="entry name" value="Enolase C-terminal domain-like"/>
    <property type="match status" value="1"/>
</dbReference>
<dbReference type="SUPFAM" id="SSF54826">
    <property type="entry name" value="Enolase N-terminal domain-like"/>
    <property type="match status" value="1"/>
</dbReference>
<dbReference type="PROSITE" id="PS00908">
    <property type="entry name" value="MR_MLE_1"/>
    <property type="match status" value="1"/>
</dbReference>
<protein>
    <recommendedName>
        <fullName>D-galactonate dehydratase family member CLOBOL_02770</fullName>
    </recommendedName>
</protein>
<comment type="function">
    <text evidence="2">Has no detectable activity with D-mannonate and with a panel of 70 other acid sugars (in vitro), in spite of the conservation of the residues that are expected to be important for catalytic activity and cofactor binding. May have evolved a divergent function.</text>
</comment>
<comment type="similarity">
    <text evidence="3">Belongs to the mandelate racemase/muconate lactonizing enzyme family. GalD subfamily.</text>
</comment>
<evidence type="ECO:0000250" key="1"/>
<evidence type="ECO:0000269" key="2">
    <source>
    </source>
</evidence>
<evidence type="ECO:0000305" key="3"/>
<feature type="chain" id="PRO_0000429904" description="D-galactonate dehydratase family member CLOBOL_02770">
    <location>
        <begin position="1"/>
        <end position="404"/>
    </location>
</feature>
<feature type="binding site" evidence="1">
    <location>
        <position position="210"/>
    </location>
    <ligand>
        <name>Mg(2+)</name>
        <dbReference type="ChEBI" id="CHEBI:18420"/>
    </ligand>
</feature>
<feature type="binding site" evidence="1">
    <location>
        <position position="212"/>
    </location>
    <ligand>
        <name>D-arabinonate</name>
        <dbReference type="ChEBI" id="CHEBI:16157"/>
    </ligand>
</feature>
<feature type="binding site" evidence="1">
    <location>
        <position position="236"/>
    </location>
    <ligand>
        <name>Mg(2+)</name>
        <dbReference type="ChEBI" id="CHEBI:18420"/>
    </ligand>
</feature>
<feature type="binding site" evidence="1">
    <location>
        <position position="262"/>
    </location>
    <ligand>
        <name>D-arabinonate</name>
        <dbReference type="ChEBI" id="CHEBI:16157"/>
    </ligand>
</feature>
<feature type="binding site" evidence="1">
    <location>
        <position position="262"/>
    </location>
    <ligand>
        <name>Mg(2+)</name>
        <dbReference type="ChEBI" id="CHEBI:18420"/>
    </ligand>
</feature>
<feature type="binding site" evidence="1">
    <location>
        <position position="283"/>
    </location>
    <ligand>
        <name>D-arabinonate</name>
        <dbReference type="ChEBI" id="CHEBI:16157"/>
    </ligand>
</feature>
<feature type="binding site" evidence="1">
    <location>
        <position position="312"/>
    </location>
    <ligand>
        <name>D-arabinonate</name>
        <dbReference type="ChEBI" id="CHEBI:16157"/>
    </ligand>
</feature>
<feature type="binding site" evidence="1">
    <location>
        <position position="339"/>
    </location>
    <ligand>
        <name>D-arabinonate</name>
        <dbReference type="ChEBI" id="CHEBI:16157"/>
    </ligand>
</feature>
<organism>
    <name type="scientific">Enterocloster bolteae (strain ATCC BAA-613 / DSM 15670 / CCUG 46953 / JCM 12243 / WAL 16351)</name>
    <name type="common">Clostridium bolteae</name>
    <dbReference type="NCBI Taxonomy" id="411902"/>
    <lineage>
        <taxon>Bacteria</taxon>
        <taxon>Bacillati</taxon>
        <taxon>Bacillota</taxon>
        <taxon>Clostridia</taxon>
        <taxon>Lachnospirales</taxon>
        <taxon>Lachnospiraceae</taxon>
        <taxon>Enterocloster</taxon>
    </lineage>
</organism>
<name>IMAND_ENTBW</name>
<reference key="1">
    <citation type="submission" date="2007-09" db="EMBL/GenBank/DDBJ databases">
        <title>Draft genome sequence of Clostridium bolteae (ATCC BAA-613).</title>
        <authorList>
            <person name="Sudarsanam P."/>
            <person name="Ley R."/>
            <person name="Guruge J."/>
            <person name="Turnbaugh P.J."/>
            <person name="Mahowald M."/>
            <person name="Liep D."/>
            <person name="Gordon J."/>
        </authorList>
    </citation>
    <scope>NUCLEOTIDE SEQUENCE [LARGE SCALE GENOMIC DNA]</scope>
    <source>
        <strain>ATCC BAA-613 / DSM 15670 / CCUG 46953 / JCM 12243 / WAL 16351</strain>
    </source>
</reference>
<reference key="2">
    <citation type="journal article" date="2014" name="Biochemistry">
        <title>Discovery of function in the enolase superfamily: D-mannonate and D-gluconate dehydratases in the D-mannonate dehydratase subgroup.</title>
        <authorList>
            <person name="Wichelecki D.J."/>
            <person name="Balthazor B.M."/>
            <person name="Chau A.C."/>
            <person name="Vetting M.W."/>
            <person name="Fedorov A.A."/>
            <person name="Fedorov E.V."/>
            <person name="Lukk T."/>
            <person name="Patskovsky Y.V."/>
            <person name="Stead M.B."/>
            <person name="Hillerich B.S."/>
            <person name="Seidel R.D."/>
            <person name="Almo S.C."/>
            <person name="Gerlt J.A."/>
        </authorList>
    </citation>
    <scope>FUNCTION</scope>
    <scope>LACK OF D-MANNONATE DEHYDRATASE ACTIVITY</scope>
    <source>
        <strain>ATCC BAA-613 / DSM 15670 / CCUG 46953 / JCM 12243 / WAL 16351</strain>
    </source>
</reference>
<sequence>MDNITIRDIKVFVTAPRGINLVIVKVETSEPELFGYGCATFTWRHKAVVTAIEEYLCPMLKGRSVHNIEDIWQTMMGSSYWRNGPILNNAISGVDEALWDIKGKLAGMPLYSLLGGKAREGVTVYRHADGGCLEEVKECISRYIEEGYRHIRCHMGTYGGNFDGRRQQMVKPEGAPEGAYFHPKMYMDSVIRLFEQVRKDFGWELEVMHDVHERLSLADTLAFTKELEPFKLFFLEDSLAPDQVGYYKYMREQTAVPFAMGELFTNPAEWKTIIQNQWIDFIRVHLSDIGGITPAVKLAHFCDAYGVRTAWHGPNDLSPIGMCAQMHLDLNSHNFGIQEFSGFTQEEEAVFPGCPKIRDGYAYVDDTPGIGVGFDEKEAAKYPAVDMDHSWLFARLPDGTAVRP</sequence>
<accession>A8RQK7</accession>
<keyword id="KW-0460">Magnesium</keyword>
<keyword id="KW-0479">Metal-binding</keyword>
<gene>
    <name type="ORF">CLOBOL_02770</name>
</gene>
<proteinExistence type="inferred from homology"/>